<evidence type="ECO:0000269" key="1">
    <source>
    </source>
</evidence>
<evidence type="ECO:0000269" key="2">
    <source ref="5"/>
</evidence>
<evidence type="ECO:0000303" key="3">
    <source>
    </source>
</evidence>
<evidence type="ECO:0000305" key="4"/>
<evidence type="ECO:0000305" key="5">
    <source>
    </source>
</evidence>
<evidence type="ECO:0000305" key="6">
    <source>
    </source>
</evidence>
<evidence type="ECO:0000312" key="7">
    <source>
        <dbReference type="EMBL" id="AAS19387.1"/>
    </source>
</evidence>
<evidence type="ECO:0000312" key="8">
    <source>
        <dbReference type="EMBL" id="AAS77087.1"/>
    </source>
</evidence>
<evidence type="ECO:0000312" key="9">
    <source>
        <dbReference type="EMBL" id="AAU05192.1"/>
    </source>
</evidence>
<evidence type="ECO:0000312" key="10">
    <source>
        <dbReference type="PDB" id="2MXZ"/>
    </source>
</evidence>
<evidence type="ECO:0007829" key="11">
    <source>
        <dbReference type="PDB" id="2MXZ"/>
    </source>
</evidence>
<evidence type="ECO:0007829" key="12">
    <source>
        <dbReference type="PDB" id="8P3A"/>
    </source>
</evidence>
<comment type="function">
    <text evidence="6">Endolysin with L-alanyl-D-glutamate peptidase activity that degrades host peptidoglycans and participates with the holin in the sequential events which lead to the programmed host cell lysis releasing the mature viral particles. Once the holin has permeabilized the host cell membrane, the endolysin can reach the periplasm and break down the peptidoglycan layer by hydrolyzing the link between L-alanine and D-glutamate residues.</text>
</comment>
<comment type="cofactor">
    <cofactor evidence="2">
        <name>Zn(2+)</name>
        <dbReference type="ChEBI" id="CHEBI:29105"/>
    </cofactor>
</comment>
<comment type="biophysicochemical properties">
    <phDependence>
        <text evidence="1">Optimum pH is 8.5.</text>
    </phDependence>
</comment>
<comment type="induction">
    <text evidence="5">Expressed in the early phase of the viral replicative cycle.</text>
</comment>
<comment type="similarity">
    <text evidence="4">Belongs to the peptidase M15C family.</text>
</comment>
<name>ENLYS_BPT5</name>
<accession>Q6QGP7</accession>
<organismHost>
    <name type="scientific">Escherichia coli</name>
    <dbReference type="NCBI Taxonomy" id="562"/>
</organismHost>
<gene>
    <name type="primary">lys</name>
    <name evidence="8" type="ordered locus">T5.040</name>
    <name evidence="9" type="ordered locus">T5p039</name>
    <name evidence="7" type="ORF">orf10c</name>
</gene>
<protein>
    <recommendedName>
        <fullName evidence="3">L-alanyl-D-glutamate peptidase</fullName>
        <ecNumber evidence="1">3.4.24.-</ecNumber>
    </recommendedName>
    <alternativeName>
        <fullName>Endolysin</fullName>
    </alternativeName>
    <alternativeName>
        <fullName>Lysozyme</fullName>
    </alternativeName>
</protein>
<proteinExistence type="evidence at protein level"/>
<feature type="chain" id="PRO_0000370250" description="L-alanyl-D-glutamate peptidase">
    <location>
        <begin position="1"/>
        <end position="137"/>
    </location>
</feature>
<feature type="binding site" evidence="2">
    <location>
        <position position="66"/>
    </location>
    <ligand>
        <name>Zn(2+)</name>
        <dbReference type="ChEBI" id="CHEBI:29105"/>
        <note>catalytic</note>
    </ligand>
</feature>
<feature type="binding site" evidence="2">
    <location>
        <position position="73"/>
    </location>
    <ligand>
        <name>Zn(2+)</name>
        <dbReference type="ChEBI" id="CHEBI:29105"/>
        <note>catalytic</note>
    </ligand>
</feature>
<feature type="binding site" evidence="2">
    <location>
        <position position="133"/>
    </location>
    <ligand>
        <name>Zn(2+)</name>
        <dbReference type="ChEBI" id="CHEBI:29105"/>
        <note>catalytic</note>
    </ligand>
</feature>
<feature type="helix" evidence="11">
    <location>
        <begin position="7"/>
        <end position="14"/>
    </location>
</feature>
<feature type="strand" evidence="11">
    <location>
        <begin position="17"/>
        <end position="19"/>
    </location>
</feature>
<feature type="helix" evidence="11">
    <location>
        <begin position="20"/>
        <end position="30"/>
    </location>
</feature>
<feature type="strand" evidence="11">
    <location>
        <begin position="31"/>
        <end position="33"/>
    </location>
</feature>
<feature type="strand" evidence="11">
    <location>
        <begin position="35"/>
        <end position="39"/>
    </location>
</feature>
<feature type="helix" evidence="11">
    <location>
        <begin position="46"/>
        <end position="49"/>
    </location>
</feature>
<feature type="helix" evidence="11">
    <location>
        <begin position="50"/>
        <end position="52"/>
    </location>
</feature>
<feature type="strand" evidence="11">
    <location>
        <begin position="63"/>
        <end position="65"/>
    </location>
</feature>
<feature type="helix" evidence="11">
    <location>
        <begin position="66"/>
        <end position="68"/>
    </location>
</feature>
<feature type="strand" evidence="11">
    <location>
        <begin position="71"/>
        <end position="78"/>
    </location>
</feature>
<feature type="helix" evidence="11">
    <location>
        <begin position="87"/>
        <end position="104"/>
    </location>
</feature>
<feature type="strand" evidence="12">
    <location>
        <begin position="108"/>
        <end position="111"/>
    </location>
</feature>
<feature type="helix" evidence="11">
    <location>
        <begin position="113"/>
        <end position="116"/>
    </location>
</feature>
<feature type="strand" evidence="12">
    <location>
        <begin position="120"/>
        <end position="122"/>
    </location>
</feature>
<feature type="turn" evidence="11">
    <location>
        <begin position="124"/>
        <end position="127"/>
    </location>
</feature>
<feature type="turn" evidence="11">
    <location>
        <begin position="130"/>
        <end position="132"/>
    </location>
</feature>
<feature type="strand" evidence="11">
    <location>
        <begin position="133"/>
        <end position="135"/>
    </location>
</feature>
<organism>
    <name type="scientific">Escherichia phage T5</name>
    <name type="common">Enterobacteria phage T5</name>
    <dbReference type="NCBI Taxonomy" id="2695836"/>
    <lineage>
        <taxon>Viruses</taxon>
        <taxon>Duplodnaviria</taxon>
        <taxon>Heunggongvirae</taxon>
        <taxon>Uroviricota</taxon>
        <taxon>Caudoviricetes</taxon>
        <taxon>Demerecviridae</taxon>
        <taxon>Markadamsvirinae</taxon>
        <taxon>Tequintavirus</taxon>
        <taxon>Tequintavirus T5</taxon>
    </lineage>
</organism>
<reference key="1">
    <citation type="submission" date="2004-01" db="EMBL/GenBank/DDBJ databases">
        <title>Bacteriophage T5 complete genome.</title>
        <authorList>
            <person name="Ksenzenko V.N."/>
            <person name="Kaliman A.V."/>
            <person name="Krutilina A.I."/>
            <person name="Shlyapnikov M.G."/>
        </authorList>
    </citation>
    <scope>NUCLEOTIDE SEQUENCE [LARGE SCALE GENOMIC DNA]</scope>
</reference>
<reference key="2">
    <citation type="journal article" date="2005" name="Virology">
        <title>Complete genome sequence of bacteriophage T5.</title>
        <authorList>
            <person name="Wang J."/>
            <person name="Jiang Y."/>
            <person name="Vincent M."/>
            <person name="Sun Y."/>
            <person name="Yu H."/>
            <person name="Wang J."/>
            <person name="Bao Q."/>
            <person name="Kong H."/>
            <person name="Hu S."/>
        </authorList>
    </citation>
    <scope>NUCLEOTIDE SEQUENCE [LARGE SCALE GENOMIC DNA]</scope>
    <scope>INDUCTION</scope>
    <source>
        <strain>ATCC 11303-B5</strain>
    </source>
</reference>
<reference key="3">
    <citation type="journal article" date="2014" name="J. Virol.">
        <title>Insights into bacteriophage T5 structure from analysis of its morphogenesis genes and protein components.</title>
        <authorList>
            <person name="Zivanovic Y."/>
            <person name="Confalonieri F."/>
            <person name="Ponchon L."/>
            <person name="Lurz R."/>
            <person name="Chami M."/>
            <person name="Flayhan A."/>
            <person name="Renouard M."/>
            <person name="Huet A."/>
            <person name="Decottignies P."/>
            <person name="Davidson A.R."/>
            <person name="Breyton C."/>
            <person name="Boulanger P."/>
        </authorList>
    </citation>
    <scope>NUCLEOTIDE SEQUENCE [LARGE SCALE GENOMIC DNA]</scope>
    <source>
        <strain>St0 deletion mutant</strain>
    </source>
</reference>
<reference key="4">
    <citation type="journal article" date="2009" name="FEBS J.">
        <title>Identification and characterization of the metal ion-dependent L-alanoyl-D-glutamate peptidase encoded by bacteriophage T5.</title>
        <authorList>
            <person name="Mikoulinskaia G.V."/>
            <person name="Odinokova I.V."/>
            <person name="Zimin A.A."/>
            <person name="Lysanskaya V.Y."/>
            <person name="Feofanov S.A."/>
            <person name="Stepnaya O.A."/>
        </authorList>
    </citation>
    <scope>CATALYTIC ACTIVITY</scope>
    <scope>BIOPHYSICOCHEMICAL PROPERTIES</scope>
    <scope>COFACTOR</scope>
    <scope>FUNCTION</scope>
</reference>
<reference evidence="10" key="5">
    <citation type="journal article" date="2015" name="RSC Adv.">
        <title>High-resolution NMR structure of a Zn2+-containing form of the bacteriophage T5 L-alanyl-D-glutamate peptidase.</title>
        <authorList>
            <person name="Prokhorov D.A."/>
            <person name="Mikoulinskaia G.V."/>
            <person name="Molochkov N.V."/>
            <person name="Uversky V.N."/>
            <person name="Kutyshenko V.P."/>
        </authorList>
    </citation>
    <scope>STRUCTURE BY NMR</scope>
    <scope>COFACTOR</scope>
</reference>
<sequence length="137" mass="15264">MSFKFGKNSEKQLATVKPELQKVARRALELSPYDFTIVQGIRTVAQSAQNIANGTSFLKDPSKSKHITGDAIDFAPYINGKIDWNDLEAFWAVKKAFEQAGKELGIKLRFGADWNASGDYHDEIKRGTYDGGHVELV</sequence>
<dbReference type="EC" id="3.4.24.-" evidence="1"/>
<dbReference type="EMBL" id="AY509815">
    <property type="protein sequence ID" value="AAS19387.1"/>
    <property type="molecule type" value="Genomic_DNA"/>
</dbReference>
<dbReference type="EMBL" id="AY543070">
    <property type="protein sequence ID" value="AAS77087.1"/>
    <property type="molecule type" value="Genomic_DNA"/>
</dbReference>
<dbReference type="EMBL" id="AY587007">
    <property type="protein sequence ID" value="AAX11973.1"/>
    <property type="molecule type" value="Genomic_DNA"/>
</dbReference>
<dbReference type="EMBL" id="AY692264">
    <property type="protein sequence ID" value="AAU05192.1"/>
    <property type="molecule type" value="Genomic_DNA"/>
</dbReference>
<dbReference type="RefSeq" id="YP_006868.1">
    <property type="nucleotide sequence ID" value="NC_005859.1"/>
</dbReference>
<dbReference type="PDB" id="2MXZ">
    <property type="method" value="NMR"/>
    <property type="chains" value="A=1-137"/>
</dbReference>
<dbReference type="PDB" id="8P3A">
    <property type="method" value="NMR"/>
    <property type="chains" value="A=1-137"/>
</dbReference>
<dbReference type="PDBsum" id="2MXZ"/>
<dbReference type="PDBsum" id="8P3A"/>
<dbReference type="BMRB" id="Q6QGP7"/>
<dbReference type="SMR" id="Q6QGP7"/>
<dbReference type="MEROPS" id="M15.022"/>
<dbReference type="GeneID" id="2777574"/>
<dbReference type="KEGG" id="vg:2777574"/>
<dbReference type="EvolutionaryTrace" id="Q6QGP7"/>
<dbReference type="Proteomes" id="UP000002107">
    <property type="component" value="Genome"/>
</dbReference>
<dbReference type="Proteomes" id="UP000002141">
    <property type="component" value="Segment"/>
</dbReference>
<dbReference type="Proteomes" id="UP000002503">
    <property type="component" value="Segment"/>
</dbReference>
<dbReference type="GO" id="GO:0046872">
    <property type="term" value="F:metal ion binding"/>
    <property type="evidence" value="ECO:0007669"/>
    <property type="project" value="UniProtKB-KW"/>
</dbReference>
<dbReference type="GO" id="GO:0008233">
    <property type="term" value="F:peptidase activity"/>
    <property type="evidence" value="ECO:0000314"/>
    <property type="project" value="UniProtKB"/>
</dbReference>
<dbReference type="GO" id="GO:0071555">
    <property type="term" value="P:cell wall organization"/>
    <property type="evidence" value="ECO:0007669"/>
    <property type="project" value="UniProtKB-KW"/>
</dbReference>
<dbReference type="GO" id="GO:0042742">
    <property type="term" value="P:defense response to bacterium"/>
    <property type="evidence" value="ECO:0007669"/>
    <property type="project" value="UniProtKB-KW"/>
</dbReference>
<dbReference type="GO" id="GO:0044659">
    <property type="term" value="P:viral release from host cell by cytolysis"/>
    <property type="evidence" value="ECO:0000314"/>
    <property type="project" value="UniProtKB"/>
</dbReference>
<dbReference type="CDD" id="cd14845">
    <property type="entry name" value="L-Ala-D-Glu_peptidase_like"/>
    <property type="match status" value="1"/>
</dbReference>
<dbReference type="FunFam" id="3.30.1380.10:FF:000004">
    <property type="entry name" value="Endolysin"/>
    <property type="match status" value="1"/>
</dbReference>
<dbReference type="Gene3D" id="3.30.1380.10">
    <property type="match status" value="1"/>
</dbReference>
<dbReference type="InterPro" id="IPR009045">
    <property type="entry name" value="Hedgehog_sig/DD-Pept_Zn-bd_sf"/>
</dbReference>
<dbReference type="SUPFAM" id="SSF55166">
    <property type="entry name" value="Hedgehog/DD-peptidase"/>
    <property type="match status" value="1"/>
</dbReference>
<keyword id="KW-0002">3D-structure</keyword>
<keyword id="KW-0929">Antimicrobial</keyword>
<keyword id="KW-0081">Bacteriolytic enzyme</keyword>
<keyword id="KW-0961">Cell wall biogenesis/degradation</keyword>
<keyword id="KW-0204">Cytolysis</keyword>
<keyword id="KW-0244">Early protein</keyword>
<keyword id="KW-0578">Host cell lysis by virus</keyword>
<keyword id="KW-0378">Hydrolase</keyword>
<keyword id="KW-0479">Metal-binding</keyword>
<keyword id="KW-1185">Reference proteome</keyword>
<keyword id="KW-1188">Viral release from host cell</keyword>
<keyword id="KW-0862">Zinc</keyword>